<organismHost>
    <name type="scientific">Magallana gigas</name>
    <name type="common">Pacific oyster</name>
    <name type="synonym">Crassostrea gigas</name>
    <dbReference type="NCBI Taxonomy" id="29159"/>
</organismHost>
<organismHost>
    <name type="scientific">Pecten maximus</name>
    <name type="common">King scallop</name>
    <name type="synonym">Pilgrim's clam</name>
    <dbReference type="NCBI Taxonomy" id="6579"/>
</organismHost>
<sequence>MNSKLNSAMYSAHMIMRHAFGYNDYNNKYGRINDVYNKMADGKRLRLEEREVKSLRGLVCTLKMMIKNTDIITYDEECCICMAKNNRKEALPCQHNVCRDCYYKPMRNNCPVCNMEWPMRKDDKHAAPYGLAEYAHTYGGEEQRTPSPPVLGTVEGGDISPRLVGAIRTNDTWLSSRRDSPYHIENRIHNNNNNNYDENNPDDLPVIHPPRRRHRQTAHISI</sequence>
<gene>
    <name type="ORF">ORF118</name>
</gene>
<proteinExistence type="predicted"/>
<protein>
    <recommendedName>
        <fullName>Putative RING finger protein ORF118</fullName>
    </recommendedName>
</protein>
<organism>
    <name type="scientific">Ostreid herpesvirus 1 (isolate France)</name>
    <name type="common">OsHV-1</name>
    <name type="synonym">Pacific oyster herpesvirus</name>
    <dbReference type="NCBI Taxonomy" id="654903"/>
    <lineage>
        <taxon>Viruses</taxon>
        <taxon>Duplodnaviria</taxon>
        <taxon>Heunggongvirae</taxon>
        <taxon>Peploviricota</taxon>
        <taxon>Herviviricetes</taxon>
        <taxon>Herpesvirales</taxon>
        <taxon>Malacoherpesviridae</taxon>
        <taxon>Ostreavirus</taxon>
        <taxon>Ostreavirus ostreidmalaco1</taxon>
        <taxon>Ostreid herpesvirus 1</taxon>
    </lineage>
</organism>
<dbReference type="EMBL" id="AY509253">
    <property type="protein sequence ID" value="AAS01007.1"/>
    <property type="molecule type" value="Genomic_DNA"/>
</dbReference>
<dbReference type="EMBL" id="AY509253">
    <property type="protein sequence ID" value="AAS01018.1"/>
    <property type="molecule type" value="Genomic_DNA"/>
</dbReference>
<dbReference type="RefSeq" id="YP_024660.1">
    <property type="nucleotide sequence ID" value="NC_005881.2"/>
</dbReference>
<dbReference type="RefSeq" id="YP_024671.1">
    <property type="nucleotide sequence ID" value="NC_005881.2"/>
</dbReference>
<dbReference type="KEGG" id="vg:2948157"/>
<dbReference type="KEGG" id="vg:2948178"/>
<dbReference type="Proteomes" id="UP000007021">
    <property type="component" value="Segment"/>
</dbReference>
<dbReference type="GO" id="GO:0008270">
    <property type="term" value="F:zinc ion binding"/>
    <property type="evidence" value="ECO:0007669"/>
    <property type="project" value="UniProtKB-KW"/>
</dbReference>
<dbReference type="CDD" id="cd16449">
    <property type="entry name" value="RING-HC"/>
    <property type="match status" value="1"/>
</dbReference>
<dbReference type="Gene3D" id="3.30.40.10">
    <property type="entry name" value="Zinc/RING finger domain, C3HC4 (zinc finger)"/>
    <property type="match status" value="1"/>
</dbReference>
<dbReference type="InterPro" id="IPR001841">
    <property type="entry name" value="Znf_RING"/>
</dbReference>
<dbReference type="InterPro" id="IPR013083">
    <property type="entry name" value="Znf_RING/FYVE/PHD"/>
</dbReference>
<dbReference type="InterPro" id="IPR017907">
    <property type="entry name" value="Znf_RING_CS"/>
</dbReference>
<dbReference type="SMART" id="SM00184">
    <property type="entry name" value="RING"/>
    <property type="match status" value="1"/>
</dbReference>
<dbReference type="SUPFAM" id="SSF57850">
    <property type="entry name" value="RING/U-box"/>
    <property type="match status" value="1"/>
</dbReference>
<dbReference type="PROSITE" id="PS00518">
    <property type="entry name" value="ZF_RING_1"/>
    <property type="match status" value="1"/>
</dbReference>
<dbReference type="PROSITE" id="PS50089">
    <property type="entry name" value="ZF_RING_2"/>
    <property type="match status" value="1"/>
</dbReference>
<accession>Q6R797</accession>
<evidence type="ECO:0000255" key="1">
    <source>
        <dbReference type="PROSITE-ProRule" id="PRU00175"/>
    </source>
</evidence>
<evidence type="ECO:0000256" key="2">
    <source>
        <dbReference type="SAM" id="MobiDB-lite"/>
    </source>
</evidence>
<keyword id="KW-0479">Metal-binding</keyword>
<keyword id="KW-1185">Reference proteome</keyword>
<keyword id="KW-0862">Zinc</keyword>
<keyword id="KW-0863">Zinc-finger</keyword>
<feature type="chain" id="PRO_0000385033" description="Putative RING finger protein ORF118">
    <location>
        <begin position="1"/>
        <end position="222"/>
    </location>
</feature>
<feature type="zinc finger region" description="RING-type" evidence="1">
    <location>
        <begin position="78"/>
        <end position="114"/>
    </location>
</feature>
<feature type="region of interest" description="Disordered" evidence="2">
    <location>
        <begin position="184"/>
        <end position="222"/>
    </location>
</feature>
<feature type="compositionally biased region" description="Low complexity" evidence="2">
    <location>
        <begin position="189"/>
        <end position="198"/>
    </location>
</feature>
<feature type="compositionally biased region" description="Basic residues" evidence="2">
    <location>
        <begin position="209"/>
        <end position="222"/>
    </location>
</feature>
<reference key="1">
    <citation type="journal article" date="2005" name="J. Gen. Virol.">
        <title>A novel class of herpesvirus with bivalve hosts.</title>
        <authorList>
            <person name="Davison A.J."/>
            <person name="Trus B.L."/>
            <person name="Cheng N."/>
            <person name="Steven A.C."/>
            <person name="Watson M.S."/>
            <person name="Cunningham C."/>
            <person name="Le Deuff R.M."/>
            <person name="Renault T."/>
        </authorList>
    </citation>
    <scope>NUCLEOTIDE SEQUENCE [LARGE SCALE GENOMIC DNA]</scope>
</reference>
<name>Y118_OSHVF</name>